<reference key="1">
    <citation type="journal article" date="2001" name="J. Bacteriol.">
        <title>Genome of the bacterium Streptococcus pneumoniae strain R6.</title>
        <authorList>
            <person name="Hoskins J."/>
            <person name="Alborn W.E. Jr."/>
            <person name="Arnold J."/>
            <person name="Blaszczak L.C."/>
            <person name="Burgett S."/>
            <person name="DeHoff B.S."/>
            <person name="Estrem S.T."/>
            <person name="Fritz L."/>
            <person name="Fu D.-J."/>
            <person name="Fuller W."/>
            <person name="Geringer C."/>
            <person name="Gilmour R."/>
            <person name="Glass J.S."/>
            <person name="Khoja H."/>
            <person name="Kraft A.R."/>
            <person name="Lagace R.E."/>
            <person name="LeBlanc D.J."/>
            <person name="Lee L.N."/>
            <person name="Lefkowitz E.J."/>
            <person name="Lu J."/>
            <person name="Matsushima P."/>
            <person name="McAhren S.M."/>
            <person name="McHenney M."/>
            <person name="McLeaster K."/>
            <person name="Mundy C.W."/>
            <person name="Nicas T.I."/>
            <person name="Norris F.H."/>
            <person name="O'Gara M."/>
            <person name="Peery R.B."/>
            <person name="Robertson G.T."/>
            <person name="Rockey P."/>
            <person name="Sun P.-M."/>
            <person name="Winkler M.E."/>
            <person name="Yang Y."/>
            <person name="Young-Bellido M."/>
            <person name="Zhao G."/>
            <person name="Zook C.A."/>
            <person name="Baltz R.H."/>
            <person name="Jaskunas S.R."/>
            <person name="Rosteck P.R. Jr."/>
            <person name="Skatrud P.L."/>
            <person name="Glass J.I."/>
        </authorList>
    </citation>
    <scope>NUCLEOTIDE SEQUENCE [LARGE SCALE GENOMIC DNA]</scope>
    <source>
        <strain>ATCC BAA-255 / R6</strain>
    </source>
</reference>
<evidence type="ECO:0000255" key="1">
    <source>
        <dbReference type="HAMAP-Rule" id="MF_00049"/>
    </source>
</evidence>
<organism>
    <name type="scientific">Streptococcus pneumoniae (strain ATCC BAA-255 / R6)</name>
    <dbReference type="NCBI Taxonomy" id="171101"/>
    <lineage>
        <taxon>Bacteria</taxon>
        <taxon>Bacillati</taxon>
        <taxon>Bacillota</taxon>
        <taxon>Bacilli</taxon>
        <taxon>Lactobacillales</taxon>
        <taxon>Streptococcaceae</taxon>
        <taxon>Streptococcus</taxon>
    </lineage>
</organism>
<protein>
    <recommendedName>
        <fullName evidence="1">Leucine--tRNA ligase</fullName>
        <ecNumber evidence="1">6.1.1.4</ecNumber>
    </recommendedName>
    <alternativeName>
        <fullName evidence="1">Leucyl-tRNA synthetase</fullName>
        <shortName evidence="1">LeuRS</shortName>
    </alternativeName>
</protein>
<sequence>MSFYNHKEIEPKWQGYWAEHHTFKTGTDASKPKFYALDMFPYPSGVGLHVGHPEGYTATDILSRYKRAQGYNVLHPMGWDAFGLPAEQYAMDTGNDPAEFTAENIANFKRQINALGFSYDWDREVNTTDPNYYKWTQWIFTKLYEKGLAYEAEVPVNWVEELGTAIANEEVLPDGTSERGGYPVVRKPMRQWMLKITAYAERLLNDLDELDWSESIKDMQRNWIGKSTGANVTFKVKGTDKEFTVFTTRPDTLFGATFTVLAPEHELVDAITSSEQAEAVADYKHQASLKSDLVRTDLAKEKTGVWTGAYAINPVNGKEMPIWIADYVLASYGTGAVMAVPAHDQRDWEFAKQFDLPIVEVLEGGNVEEAAYTEDGLHVNSDFLDGLNKEDAIAKIVACLEEKGCGQEKVTYRLRDWLFSRQRYWGEPIPIIHWEDGTSTAVPETELPLVLPVTKDIRPSGTGESPLANLTDWLEVTREDGVKGRRETNTMPQWAGSSWYYLRYIDPHNTEKLADEDLLKQWLPVDIYVGGAEHAVLHLLYARFWHKFLYDLGVVPTKEPFQKLFNQGMILGTSYRDHRGALVATDKVEKRDGSFFHIETGEELEQAPAKMSKSLKNVVNPDDVVEQYGADTLRVYEMFMGPLDASIAWSEEGLEGSRKFLDRVYRLITSKEILAENNGALDKAYNETVKAVTEQIESLKFNTAIAQLMVFVNAANKEDKLYVDYAKGFIQLIAPFAPHLAEELWQTVAETGESISYVAWPTWDESKLVEDEIEIVVQIKGKVRAKLMVAKDLSREELQEIALADEKVKAEIDGKEIVKVISVPNKLVNIVVK</sequence>
<name>SYL_STRR6</name>
<comment type="catalytic activity">
    <reaction evidence="1">
        <text>tRNA(Leu) + L-leucine + ATP = L-leucyl-tRNA(Leu) + AMP + diphosphate</text>
        <dbReference type="Rhea" id="RHEA:11688"/>
        <dbReference type="Rhea" id="RHEA-COMP:9613"/>
        <dbReference type="Rhea" id="RHEA-COMP:9622"/>
        <dbReference type="ChEBI" id="CHEBI:30616"/>
        <dbReference type="ChEBI" id="CHEBI:33019"/>
        <dbReference type="ChEBI" id="CHEBI:57427"/>
        <dbReference type="ChEBI" id="CHEBI:78442"/>
        <dbReference type="ChEBI" id="CHEBI:78494"/>
        <dbReference type="ChEBI" id="CHEBI:456215"/>
        <dbReference type="EC" id="6.1.1.4"/>
    </reaction>
</comment>
<comment type="subcellular location">
    <subcellularLocation>
        <location evidence="1">Cytoplasm</location>
    </subcellularLocation>
</comment>
<comment type="similarity">
    <text evidence="1">Belongs to the class-I aminoacyl-tRNA synthetase family.</text>
</comment>
<accession>Q8DRB6</accession>
<dbReference type="EC" id="6.1.1.4" evidence="1"/>
<dbReference type="EMBL" id="AE007317">
    <property type="protein sequence ID" value="AAK99039.1"/>
    <property type="molecule type" value="Genomic_DNA"/>
</dbReference>
<dbReference type="PIR" id="C97901">
    <property type="entry name" value="C97901"/>
</dbReference>
<dbReference type="RefSeq" id="NP_357829.1">
    <property type="nucleotide sequence ID" value="NC_003098.1"/>
</dbReference>
<dbReference type="RefSeq" id="WP_000011789.1">
    <property type="nucleotide sequence ID" value="NC_003098.1"/>
</dbReference>
<dbReference type="SMR" id="Q8DRB6"/>
<dbReference type="STRING" id="171101.spr0235"/>
<dbReference type="KEGG" id="spr:spr0235"/>
<dbReference type="PATRIC" id="fig|171101.6.peg.268"/>
<dbReference type="eggNOG" id="COG0495">
    <property type="taxonomic scope" value="Bacteria"/>
</dbReference>
<dbReference type="HOGENOM" id="CLU_004427_0_0_9"/>
<dbReference type="Proteomes" id="UP000000586">
    <property type="component" value="Chromosome"/>
</dbReference>
<dbReference type="GO" id="GO:0005829">
    <property type="term" value="C:cytosol"/>
    <property type="evidence" value="ECO:0000318"/>
    <property type="project" value="GO_Central"/>
</dbReference>
<dbReference type="GO" id="GO:0002161">
    <property type="term" value="F:aminoacyl-tRNA deacylase activity"/>
    <property type="evidence" value="ECO:0007669"/>
    <property type="project" value="InterPro"/>
</dbReference>
<dbReference type="GO" id="GO:0005524">
    <property type="term" value="F:ATP binding"/>
    <property type="evidence" value="ECO:0007669"/>
    <property type="project" value="UniProtKB-UniRule"/>
</dbReference>
<dbReference type="GO" id="GO:0004823">
    <property type="term" value="F:leucine-tRNA ligase activity"/>
    <property type="evidence" value="ECO:0000318"/>
    <property type="project" value="GO_Central"/>
</dbReference>
<dbReference type="GO" id="GO:0006429">
    <property type="term" value="P:leucyl-tRNA aminoacylation"/>
    <property type="evidence" value="ECO:0000318"/>
    <property type="project" value="GO_Central"/>
</dbReference>
<dbReference type="CDD" id="cd07958">
    <property type="entry name" value="Anticodon_Ia_Leu_BEm"/>
    <property type="match status" value="1"/>
</dbReference>
<dbReference type="CDD" id="cd00812">
    <property type="entry name" value="LeuRS_core"/>
    <property type="match status" value="1"/>
</dbReference>
<dbReference type="FunFam" id="1.10.730.10:FF:000012">
    <property type="entry name" value="Leucine--tRNA ligase"/>
    <property type="match status" value="1"/>
</dbReference>
<dbReference type="FunFam" id="3.40.50.620:FF:000056">
    <property type="entry name" value="Leucine--tRNA ligase"/>
    <property type="match status" value="1"/>
</dbReference>
<dbReference type="FunFam" id="3.40.50.620:FF:000077">
    <property type="entry name" value="Leucine--tRNA ligase"/>
    <property type="match status" value="1"/>
</dbReference>
<dbReference type="FunFam" id="1.10.730.10:FF:000011">
    <property type="entry name" value="Leucine--tRNA ligase chloroplastic/mitochondrial"/>
    <property type="match status" value="1"/>
</dbReference>
<dbReference type="Gene3D" id="3.40.50.620">
    <property type="entry name" value="HUPs"/>
    <property type="match status" value="2"/>
</dbReference>
<dbReference type="Gene3D" id="1.10.730.10">
    <property type="entry name" value="Isoleucyl-tRNA Synthetase, Domain 1"/>
    <property type="match status" value="1"/>
</dbReference>
<dbReference type="Gene3D" id="3.90.740.10">
    <property type="entry name" value="Valyl/Leucyl/Isoleucyl-tRNA synthetase, editing domain"/>
    <property type="match status" value="1"/>
</dbReference>
<dbReference type="HAMAP" id="MF_00049_B">
    <property type="entry name" value="Leu_tRNA_synth_B"/>
    <property type="match status" value="1"/>
</dbReference>
<dbReference type="InterPro" id="IPR002300">
    <property type="entry name" value="aa-tRNA-synth_Ia"/>
</dbReference>
<dbReference type="InterPro" id="IPR002302">
    <property type="entry name" value="Leu-tRNA-ligase"/>
</dbReference>
<dbReference type="InterPro" id="IPR025709">
    <property type="entry name" value="Leu_tRNA-synth_edit"/>
</dbReference>
<dbReference type="InterPro" id="IPR013155">
    <property type="entry name" value="M/V/L/I-tRNA-synth_anticd-bd"/>
</dbReference>
<dbReference type="InterPro" id="IPR015413">
    <property type="entry name" value="Methionyl/Leucyl_tRNA_Synth"/>
</dbReference>
<dbReference type="InterPro" id="IPR014729">
    <property type="entry name" value="Rossmann-like_a/b/a_fold"/>
</dbReference>
<dbReference type="InterPro" id="IPR009080">
    <property type="entry name" value="tRNAsynth_Ia_anticodon-bd"/>
</dbReference>
<dbReference type="InterPro" id="IPR009008">
    <property type="entry name" value="Val/Leu/Ile-tRNA-synth_edit"/>
</dbReference>
<dbReference type="NCBIfam" id="TIGR00396">
    <property type="entry name" value="leuS_bact"/>
    <property type="match status" value="1"/>
</dbReference>
<dbReference type="PANTHER" id="PTHR43740:SF2">
    <property type="entry name" value="LEUCINE--TRNA LIGASE, MITOCHONDRIAL"/>
    <property type="match status" value="1"/>
</dbReference>
<dbReference type="PANTHER" id="PTHR43740">
    <property type="entry name" value="LEUCYL-TRNA SYNTHETASE"/>
    <property type="match status" value="1"/>
</dbReference>
<dbReference type="Pfam" id="PF08264">
    <property type="entry name" value="Anticodon_1"/>
    <property type="match status" value="1"/>
</dbReference>
<dbReference type="Pfam" id="PF00133">
    <property type="entry name" value="tRNA-synt_1"/>
    <property type="match status" value="2"/>
</dbReference>
<dbReference type="Pfam" id="PF13603">
    <property type="entry name" value="tRNA-synt_1_2"/>
    <property type="match status" value="1"/>
</dbReference>
<dbReference type="Pfam" id="PF09334">
    <property type="entry name" value="tRNA-synt_1g"/>
    <property type="match status" value="1"/>
</dbReference>
<dbReference type="PRINTS" id="PR00985">
    <property type="entry name" value="TRNASYNTHLEU"/>
</dbReference>
<dbReference type="SUPFAM" id="SSF47323">
    <property type="entry name" value="Anticodon-binding domain of a subclass of class I aminoacyl-tRNA synthetases"/>
    <property type="match status" value="1"/>
</dbReference>
<dbReference type="SUPFAM" id="SSF52374">
    <property type="entry name" value="Nucleotidylyl transferase"/>
    <property type="match status" value="1"/>
</dbReference>
<dbReference type="SUPFAM" id="SSF50677">
    <property type="entry name" value="ValRS/IleRS/LeuRS editing domain"/>
    <property type="match status" value="1"/>
</dbReference>
<keyword id="KW-0030">Aminoacyl-tRNA synthetase</keyword>
<keyword id="KW-0067">ATP-binding</keyword>
<keyword id="KW-0963">Cytoplasm</keyword>
<keyword id="KW-0436">Ligase</keyword>
<keyword id="KW-0547">Nucleotide-binding</keyword>
<keyword id="KW-0648">Protein biosynthesis</keyword>
<keyword id="KW-1185">Reference proteome</keyword>
<feature type="chain" id="PRO_0000152096" description="Leucine--tRNA ligase">
    <location>
        <begin position="1"/>
        <end position="833"/>
    </location>
</feature>
<feature type="short sequence motif" description="'HIGH' region">
    <location>
        <begin position="41"/>
        <end position="52"/>
    </location>
</feature>
<feature type="short sequence motif" description="'KMSKS' region">
    <location>
        <begin position="610"/>
        <end position="614"/>
    </location>
</feature>
<feature type="binding site" evidence="1">
    <location>
        <position position="613"/>
    </location>
    <ligand>
        <name>ATP</name>
        <dbReference type="ChEBI" id="CHEBI:30616"/>
    </ligand>
</feature>
<gene>
    <name evidence="1" type="primary">leuS</name>
    <name type="ordered locus">spr0235</name>
</gene>
<proteinExistence type="inferred from homology"/>